<protein>
    <recommendedName>
        <fullName evidence="2">ATP synthase subunit b</fullName>
    </recommendedName>
    <alternativeName>
        <fullName evidence="2">ATP synthase F(0) sector subunit b</fullName>
    </alternativeName>
    <alternativeName>
        <fullName evidence="2">ATPase subunit I</fullName>
    </alternativeName>
    <alternativeName>
        <fullName evidence="2">F-type ATPase subunit b</fullName>
        <shortName evidence="2">F-ATPase subunit b</shortName>
    </alternativeName>
</protein>
<accession>B1AIC4</accession>
<evidence type="ECO:0000255" key="1"/>
<evidence type="ECO:0000255" key="2">
    <source>
        <dbReference type="HAMAP-Rule" id="MF_01398"/>
    </source>
</evidence>
<proteinExistence type="inferred from homology"/>
<reference key="1">
    <citation type="submission" date="2008-02" db="EMBL/GenBank/DDBJ databases">
        <title>Genome sequence of Ureaplasma parvum serovar 3.</title>
        <authorList>
            <person name="Methe B.A."/>
            <person name="Glass J."/>
            <person name="Waites K."/>
            <person name="Shrivastava S."/>
        </authorList>
    </citation>
    <scope>NUCLEOTIDE SEQUENCE [LARGE SCALE GENOMIC DNA]</scope>
    <source>
        <strain>ATCC 27815 / 27 / NCTC 11736</strain>
    </source>
</reference>
<sequence>MKLNKKHLVAILSVLSLSIIVVPLLTSCTGDIPELNPAEIINTLFPNVWVFIAQVIAMCVVFSLVLWLVWKPTNKMLDKRREYIAKEITDAENAKQEALQYLENAKSEHLAAQAQTLEIIAKAKSESLTLRESLEKEAREAADKIISSAKISIANERRENLERLQSEAREAAYIAAEALMKKELSREDNDKLVDQFIKELENNEK</sequence>
<organism>
    <name type="scientific">Ureaplasma parvum serovar 3 (strain ATCC 27815 / 27 / NCTC 11736)</name>
    <dbReference type="NCBI Taxonomy" id="505682"/>
    <lineage>
        <taxon>Bacteria</taxon>
        <taxon>Bacillati</taxon>
        <taxon>Mycoplasmatota</taxon>
        <taxon>Mycoplasmoidales</taxon>
        <taxon>Mycoplasmoidaceae</taxon>
        <taxon>Ureaplasma</taxon>
    </lineage>
</organism>
<feature type="signal peptide" evidence="1">
    <location>
        <begin position="1"/>
        <end position="27"/>
    </location>
</feature>
<feature type="chain" id="PRO_0000368853" description="ATP synthase subunit b">
    <location>
        <begin position="28"/>
        <end position="205"/>
    </location>
</feature>
<feature type="transmembrane region" description="Helical" evidence="2">
    <location>
        <begin position="48"/>
        <end position="68"/>
    </location>
</feature>
<feature type="lipid moiety-binding region" description="N-palmitoyl cysteine" evidence="1">
    <location>
        <position position="28"/>
    </location>
</feature>
<feature type="lipid moiety-binding region" description="S-diacylglycerol cysteine" evidence="1">
    <location>
        <position position="28"/>
    </location>
</feature>
<comment type="function">
    <text evidence="2">F(1)F(0) ATP synthase produces ATP from ADP in the presence of a proton or sodium gradient. F-type ATPases consist of two structural domains, F(1) containing the extramembraneous catalytic core and F(0) containing the membrane proton channel, linked together by a central stalk and a peripheral stalk. During catalysis, ATP synthesis in the catalytic domain of F(1) is coupled via a rotary mechanism of the central stalk subunits to proton translocation.</text>
</comment>
<comment type="function">
    <text evidence="2">Component of the F(0) channel, it forms part of the peripheral stalk, linking F(1) to F(0).</text>
</comment>
<comment type="subunit">
    <text evidence="2">F-type ATPases have 2 components, F(1) - the catalytic core - and F(0) - the membrane proton channel. F(1) has five subunits: alpha(3), beta(3), gamma(1), delta(1), epsilon(1). F(0) has three main subunits: a(1), b(2) and c(10-14). The alpha and beta chains form an alternating ring which encloses part of the gamma chain. F(1) is attached to F(0) by a central stalk formed by the gamma and epsilon chains, while a peripheral stalk is formed by the delta and b chains.</text>
</comment>
<comment type="subcellular location">
    <subcellularLocation>
        <location evidence="2">Cell membrane</location>
        <topology evidence="2">Single-pass membrane protein</topology>
    </subcellularLocation>
</comment>
<comment type="similarity">
    <text evidence="2">Belongs to the ATPase B chain family.</text>
</comment>
<keyword id="KW-0066">ATP synthesis</keyword>
<keyword id="KW-1003">Cell membrane</keyword>
<keyword id="KW-0138">CF(0)</keyword>
<keyword id="KW-0375">Hydrogen ion transport</keyword>
<keyword id="KW-0406">Ion transport</keyword>
<keyword id="KW-0449">Lipoprotein</keyword>
<keyword id="KW-0472">Membrane</keyword>
<keyword id="KW-0564">Palmitate</keyword>
<keyword id="KW-0732">Signal</keyword>
<keyword id="KW-0812">Transmembrane</keyword>
<keyword id="KW-1133">Transmembrane helix</keyword>
<keyword id="KW-0813">Transport</keyword>
<name>ATPF_UREP2</name>
<dbReference type="EMBL" id="CP000942">
    <property type="protein sequence ID" value="ACA33087.1"/>
    <property type="molecule type" value="Genomic_DNA"/>
</dbReference>
<dbReference type="SMR" id="B1AIC4"/>
<dbReference type="KEGG" id="upa:UPA3_0141"/>
<dbReference type="HOGENOM" id="CLU_079215_4_3_14"/>
<dbReference type="Proteomes" id="UP000002162">
    <property type="component" value="Chromosome"/>
</dbReference>
<dbReference type="GO" id="GO:0005886">
    <property type="term" value="C:plasma membrane"/>
    <property type="evidence" value="ECO:0007669"/>
    <property type="project" value="UniProtKB-SubCell"/>
</dbReference>
<dbReference type="GO" id="GO:0045259">
    <property type="term" value="C:proton-transporting ATP synthase complex"/>
    <property type="evidence" value="ECO:0007669"/>
    <property type="project" value="UniProtKB-KW"/>
</dbReference>
<dbReference type="GO" id="GO:0046933">
    <property type="term" value="F:proton-transporting ATP synthase activity, rotational mechanism"/>
    <property type="evidence" value="ECO:0007669"/>
    <property type="project" value="UniProtKB-UniRule"/>
</dbReference>
<dbReference type="GO" id="GO:0046961">
    <property type="term" value="F:proton-transporting ATPase activity, rotational mechanism"/>
    <property type="evidence" value="ECO:0007669"/>
    <property type="project" value="TreeGrafter"/>
</dbReference>
<dbReference type="CDD" id="cd06503">
    <property type="entry name" value="ATP-synt_Fo_b"/>
    <property type="match status" value="1"/>
</dbReference>
<dbReference type="HAMAP" id="MF_01398">
    <property type="entry name" value="ATP_synth_b_bprime"/>
    <property type="match status" value="1"/>
</dbReference>
<dbReference type="InterPro" id="IPR002146">
    <property type="entry name" value="ATP_synth_b/b'su_bac/chlpt"/>
</dbReference>
<dbReference type="InterPro" id="IPR005864">
    <property type="entry name" value="ATP_synth_F0_bsu_bac"/>
</dbReference>
<dbReference type="InterPro" id="IPR050059">
    <property type="entry name" value="ATP_synthase_B_chain"/>
</dbReference>
<dbReference type="NCBIfam" id="TIGR01144">
    <property type="entry name" value="ATP_synt_b"/>
    <property type="match status" value="1"/>
</dbReference>
<dbReference type="NCBIfam" id="NF004874">
    <property type="entry name" value="PRK06231.2-1"/>
    <property type="match status" value="1"/>
</dbReference>
<dbReference type="PANTHER" id="PTHR33445:SF1">
    <property type="entry name" value="ATP SYNTHASE SUBUNIT B"/>
    <property type="match status" value="1"/>
</dbReference>
<dbReference type="PANTHER" id="PTHR33445">
    <property type="entry name" value="ATP SYNTHASE SUBUNIT B', CHLOROPLASTIC"/>
    <property type="match status" value="1"/>
</dbReference>
<dbReference type="Pfam" id="PF00430">
    <property type="entry name" value="ATP-synt_B"/>
    <property type="match status" value="1"/>
</dbReference>
<dbReference type="PROSITE" id="PS51257">
    <property type="entry name" value="PROKAR_LIPOPROTEIN"/>
    <property type="match status" value="1"/>
</dbReference>
<gene>
    <name evidence="2" type="primary">atpF</name>
    <name type="ordered locus">UPA3_0141</name>
</gene>